<comment type="function">
    <text evidence="3 6 9">Inhibitory receptor that acts as a critical regulator of hematopoietic lineage differentiation, megakaryocyte function and platelet production (PubMed:12665801, PubMed:17311996, PubMed:27743390). Inhibits platelet aggregation and activation by agonists such as ADP and collagen-related peptide (PubMed:12665801). This regulation of megakaryocate function as well as platelet production ann activation is done through the inhibition (via the 2 ITIM motifs) of the receptors CLEC1B and GP6:FcRgamma signaling (PubMed:17311996). Appears to operate in a calcium-independent manner (PubMed:12665801).</text>
</comment>
<comment type="function">
    <text evidence="13">Isoform B, displayed in this entry, is the only isoform to contain both a transmembrane region and 2 immunoreceptor tyrosine-based inhibitor motifs (ITIMs) and, thus, the only one which probably has a role of inhibitory receptor. Isoform A may be the activating counterpart of isoform B.</text>
</comment>
<comment type="subunit">
    <text evidence="2 5 8 14">Interacts (via ITIM motif) with PTPN6 and PTPN11 (PubMed:11544253, PubMed:23112346). Binds to heparin (PubMed:15848171).</text>
</comment>
<comment type="subcellular location">
    <molecule>Isoform E</molecule>
    <subcellularLocation>
        <location evidence="2">Endoplasmic reticulum</location>
    </subcellularLocation>
    <subcellularLocation>
        <location evidence="2">Golgi apparatus</location>
    </subcellularLocation>
</comment>
<comment type="subcellular location">
    <molecule>Isoform D</molecule>
    <subcellularLocation>
        <location evidence="2">Endoplasmic reticulum</location>
    </subcellularLocation>
    <subcellularLocation>
        <location evidence="2">Golgi apparatus</location>
    </subcellularLocation>
</comment>
<comment type="subcellular location">
    <molecule>Isoform B</molecule>
    <subcellularLocation>
        <location evidence="2">Cell membrane</location>
        <topology evidence="12">Single-pass type I membrane protein</topology>
    </subcellularLocation>
</comment>
<comment type="subcellular location">
    <molecule>Isoform A</molecule>
    <subcellularLocation>
        <location evidence="2">Cell membrane</location>
        <topology evidence="12">Single-pass type I membrane protein</topology>
    </subcellularLocation>
</comment>
<comment type="alternative products">
    <event type="alternative splicing"/>
    <isoform>
        <id>O95866-1</id>
        <name evidence="2">B</name>
        <sequence type="displayed"/>
    </isoform>
    <isoform>
        <id>O95866-2</id>
        <name evidence="2">A</name>
        <sequence type="described" ref="VSP_014176"/>
    </isoform>
    <isoform>
        <id>O95866-3</id>
        <name evidence="2">C</name>
        <sequence type="described" ref="VSP_014174"/>
    </isoform>
    <isoform>
        <id>O95866-4</id>
        <name evidence="2">D</name>
        <sequence type="described" ref="VSP_014172"/>
    </isoform>
    <isoform>
        <id>O95866-5</id>
        <name evidence="2">E</name>
        <sequence type="described" ref="VSP_014173"/>
    </isoform>
    <isoform>
        <id>O95866-6</id>
        <name evidence="2">F</name>
        <sequence type="described" ref="VSP_014175"/>
    </isoform>
    <isoform>
        <id>O95866-7</id>
        <name evidence="2">G</name>
        <sequence type="described" ref="VSP_014177"/>
    </isoform>
</comment>
<comment type="tissue specificity">
    <text evidence="2 6">Expressed in platelets. Expressed in a restricted set of hematopoietic cell lines including the erythroleukemia cell line K-562 and the T-cell leukemia cell lines MOLT-4 and Jurkat. Not detected in the monocyte-like cell line U-937, the B-cell-like cell line Raji, the fibroblast cell lines TK and HeLa, or the natural killer cell lines NKL, NK 62 and YT.</text>
</comment>
<comment type="domain">
    <text evidence="14">Isoform B, displayed in this entry, is the only one of the isoforms to contain both a transmembrane region and 2 copies of a cytoplasmic motif that is referred to as the immunoreceptor tyrosine-based inhibitor motif (ITIM). This motif is involved in modulation of cellular responses. The phosphorylated ITIM motif can bind the SH2 domain of several SH2-containing phosphatases. The 2 ITIM motifs of isoform B are required for the inhibition of CLEC1B and GP6:FCER1G signaling and platelet activation.</text>
</comment>
<comment type="PTM">
    <text evidence="2 8">All isoforms are N-glycosylated.</text>
</comment>
<comment type="PTM">
    <text evidence="2">Isoform E is O-glycosylated.</text>
</comment>
<comment type="PTM">
    <text evidence="2 8">Phosphorylated.</text>
</comment>
<comment type="disease" evidence="9">
    <disease id="DI-04987">
        <name>Thrombocytopenia, anemia, and myelofibrosis</name>
        <acronym>THAMY</acronym>
        <description>An autosomal recessive disorder characterized by thrombocytopenia, increased number of giant platelets, and anemia manifesting in early childhood. Bone marrow biopsy shows increased number of megakaryocytes and reticular fibrosis consistent with myelofibrosis.</description>
        <dbReference type="MIM" id="617441"/>
    </disease>
    <text>The disease is caused by variants affecting the gene represented in this entry.</text>
</comment>
<keyword id="KW-0002">3D-structure</keyword>
<keyword id="KW-0025">Alternative splicing</keyword>
<keyword id="KW-1003">Cell membrane</keyword>
<keyword id="KW-0903">Direct protein sequencing</keyword>
<keyword id="KW-0256">Endoplasmic reticulum</keyword>
<keyword id="KW-0325">Glycoprotein</keyword>
<keyword id="KW-0333">Golgi apparatus</keyword>
<keyword id="KW-0358">Heparin-binding</keyword>
<keyword id="KW-0472">Membrane</keyword>
<keyword id="KW-0597">Phosphoprotein</keyword>
<keyword id="KW-1267">Proteomics identification</keyword>
<keyword id="KW-0675">Receptor</keyword>
<keyword id="KW-1185">Reference proteome</keyword>
<keyword id="KW-0732">Signal</keyword>
<keyword id="KW-0812">Transmembrane</keyword>
<keyword id="KW-1133">Transmembrane helix</keyword>
<protein>
    <recommendedName>
        <fullName evidence="19">Megakaryocyte and platelet inhibitory receptor G6b</fullName>
    </recommendedName>
    <alternativeName>
        <fullName evidence="12">Protein G6b</fullName>
    </alternativeName>
</protein>
<accession>O95866</accession>
<accession>A2BEZ1</accession>
<accession>A2BEZ2</accession>
<accession>A2BEZ3</accession>
<accession>A2BEZ4</accession>
<accession>A2BEZ5</accession>
<accession>B0UXC4</accession>
<accession>B0UXC7</accession>
<accession>B0UXC8</accession>
<accession>B0V024</accession>
<accession>B0V026</accession>
<accession>Q14CK2</accession>
<accession>Q96A86</accession>
<accession>Q96A87</accession>
<accession>Q96A88</accession>
<accession>Q96A89</accession>
<accession>Q96A90</accession>
<accession>Q96A91</accession>
<dbReference type="EMBL" id="AJ292259">
    <property type="protein sequence ID" value="CAC83497.1"/>
    <property type="molecule type" value="mRNA"/>
</dbReference>
<dbReference type="EMBL" id="AJ292260">
    <property type="protein sequence ID" value="CAC83496.1"/>
    <property type="molecule type" value="mRNA"/>
</dbReference>
<dbReference type="EMBL" id="AJ292261">
    <property type="protein sequence ID" value="CAC83498.1"/>
    <property type="molecule type" value="mRNA"/>
</dbReference>
<dbReference type="EMBL" id="AJ292262">
    <property type="protein sequence ID" value="CAC83502.1"/>
    <property type="molecule type" value="mRNA"/>
</dbReference>
<dbReference type="EMBL" id="AJ292263">
    <property type="protein sequence ID" value="CAC83499.1"/>
    <property type="molecule type" value="mRNA"/>
</dbReference>
<dbReference type="EMBL" id="AJ292264">
    <property type="protein sequence ID" value="CAC83500.1"/>
    <property type="molecule type" value="mRNA"/>
</dbReference>
<dbReference type="EMBL" id="AJ292265">
    <property type="protein sequence ID" value="CAC83501.1"/>
    <property type="molecule type" value="mRNA"/>
</dbReference>
<dbReference type="EMBL" id="AF129756">
    <property type="protein sequence ID" value="AAD18075.1"/>
    <property type="molecule type" value="Genomic_DNA"/>
</dbReference>
<dbReference type="EMBL" id="BA000025">
    <property type="protein sequence ID" value="BAB63378.1"/>
    <property type="molecule type" value="Genomic_DNA"/>
</dbReference>
<dbReference type="EMBL" id="AL670886">
    <property type="protein sequence ID" value="CAI17813.2"/>
    <property type="molecule type" value="Genomic_DNA"/>
</dbReference>
<dbReference type="EMBL" id="AL670886">
    <property type="protein sequence ID" value="CAI17814.2"/>
    <property type="molecule type" value="Genomic_DNA"/>
</dbReference>
<dbReference type="EMBL" id="AL670886">
    <property type="protein sequence ID" value="CAI17815.1"/>
    <property type="molecule type" value="Genomic_DNA"/>
</dbReference>
<dbReference type="EMBL" id="AL670886">
    <property type="protein sequence ID" value="CAI17816.2"/>
    <property type="molecule type" value="Genomic_DNA"/>
</dbReference>
<dbReference type="EMBL" id="AL670886">
    <property type="protein sequence ID" value="CAI17818.2"/>
    <property type="molecule type" value="Genomic_DNA"/>
</dbReference>
<dbReference type="EMBL" id="AL662899">
    <property type="protein sequence ID" value="CAI18406.2"/>
    <property type="molecule type" value="Genomic_DNA"/>
</dbReference>
<dbReference type="EMBL" id="AL662899">
    <property type="protein sequence ID" value="CAI18407.2"/>
    <property type="molecule type" value="Genomic_DNA"/>
</dbReference>
<dbReference type="EMBL" id="AL662899">
    <property type="protein sequence ID" value="CAI18408.1"/>
    <property type="molecule type" value="Genomic_DNA"/>
</dbReference>
<dbReference type="EMBL" id="AL662899">
    <property type="protein sequence ID" value="CAI18409.2"/>
    <property type="molecule type" value="Genomic_DNA"/>
</dbReference>
<dbReference type="EMBL" id="AL662899">
    <property type="protein sequence ID" value="CAI18412.2"/>
    <property type="molecule type" value="Genomic_DNA"/>
</dbReference>
<dbReference type="EMBL" id="BX248244">
    <property type="protein sequence ID" value="CAM26092.1"/>
    <property type="molecule type" value="Genomic_DNA"/>
</dbReference>
<dbReference type="EMBL" id="BX248244">
    <property type="protein sequence ID" value="CAM26093.1"/>
    <property type="molecule type" value="Genomic_DNA"/>
</dbReference>
<dbReference type="EMBL" id="BX248244">
    <property type="protein sequence ID" value="CAM26094.1"/>
    <property type="molecule type" value="Genomic_DNA"/>
</dbReference>
<dbReference type="EMBL" id="BX248244">
    <property type="protein sequence ID" value="CAM26095.1"/>
    <property type="molecule type" value="Genomic_DNA"/>
</dbReference>
<dbReference type="EMBL" id="BX248244">
    <property type="protein sequence ID" value="CAM26096.1"/>
    <property type="molecule type" value="Genomic_DNA"/>
</dbReference>
<dbReference type="EMBL" id="AL844216">
    <property type="protein sequence ID" value="CAM45767.1"/>
    <property type="molecule type" value="Genomic_DNA"/>
</dbReference>
<dbReference type="EMBL" id="AL844216">
    <property type="protein sequence ID" value="CAM45768.1"/>
    <property type="molecule type" value="Genomic_DNA"/>
</dbReference>
<dbReference type="EMBL" id="AL844216">
    <property type="protein sequence ID" value="CAM45769.1"/>
    <property type="molecule type" value="Genomic_DNA"/>
</dbReference>
<dbReference type="EMBL" id="AL844216">
    <property type="protein sequence ID" value="CAM45770.1"/>
    <property type="molecule type" value="Genomic_DNA"/>
</dbReference>
<dbReference type="EMBL" id="AL844216">
    <property type="protein sequence ID" value="CAM45771.1"/>
    <property type="molecule type" value="Genomic_DNA"/>
</dbReference>
<dbReference type="EMBL" id="CR354443">
    <property type="protein sequence ID" value="CAQ07017.1"/>
    <property type="molecule type" value="Genomic_DNA"/>
</dbReference>
<dbReference type="EMBL" id="CR354443">
    <property type="protein sequence ID" value="CAQ07020.1"/>
    <property type="molecule type" value="Genomic_DNA"/>
</dbReference>
<dbReference type="EMBL" id="CR354443">
    <property type="protein sequence ID" value="CAQ07021.1"/>
    <property type="molecule type" value="Genomic_DNA"/>
</dbReference>
<dbReference type="EMBL" id="CR936239">
    <property type="protein sequence ID" value="CAQ08890.1"/>
    <property type="molecule type" value="Genomic_DNA"/>
</dbReference>
<dbReference type="EMBL" id="CR936239">
    <property type="protein sequence ID" value="CAQ08892.1"/>
    <property type="molecule type" value="Genomic_DNA"/>
</dbReference>
<dbReference type="EMBL" id="CR936239">
    <property type="protein sequence ID" value="CAQ08893.1"/>
    <property type="molecule type" value="Genomic_DNA"/>
</dbReference>
<dbReference type="EMBL" id="CR936239">
    <property type="protein sequence ID" value="CAQ08894.1"/>
    <property type="molecule type" value="Genomic_DNA"/>
</dbReference>
<dbReference type="EMBL" id="CR759787">
    <property type="protein sequence ID" value="CAQ10105.1"/>
    <property type="molecule type" value="Genomic_DNA"/>
</dbReference>
<dbReference type="EMBL" id="CR759787">
    <property type="protein sequence ID" value="CAQ10107.1"/>
    <property type="molecule type" value="Genomic_DNA"/>
</dbReference>
<dbReference type="EMBL" id="CR759787">
    <property type="protein sequence ID" value="CAQ10108.1"/>
    <property type="molecule type" value="Genomic_DNA"/>
</dbReference>
<dbReference type="EMBL" id="CR759787">
    <property type="protein sequence ID" value="CAQ10109.1"/>
    <property type="molecule type" value="Genomic_DNA"/>
</dbReference>
<dbReference type="EMBL" id="CH471081">
    <property type="protein sequence ID" value="EAX03493.1"/>
    <property type="molecule type" value="Genomic_DNA"/>
</dbReference>
<dbReference type="EMBL" id="CH471081">
    <property type="protein sequence ID" value="EAX03494.1"/>
    <property type="molecule type" value="Genomic_DNA"/>
</dbReference>
<dbReference type="EMBL" id="CH471081">
    <property type="protein sequence ID" value="EAX03497.1"/>
    <property type="molecule type" value="Genomic_DNA"/>
</dbReference>
<dbReference type="EMBL" id="CH471081">
    <property type="protein sequence ID" value="EAX03498.1"/>
    <property type="molecule type" value="Genomic_DNA"/>
</dbReference>
<dbReference type="EMBL" id="BC113719">
    <property type="protein sequence ID" value="AAI13720.1"/>
    <property type="molecule type" value="mRNA"/>
</dbReference>
<dbReference type="EMBL" id="BC113721">
    <property type="protein sequence ID" value="AAI13722.1"/>
    <property type="molecule type" value="mRNA"/>
</dbReference>
<dbReference type="CCDS" id="CCDS34405.1">
    <molecule id="O95866-5"/>
</dbReference>
<dbReference type="CCDS" id="CCDS34406.1">
    <molecule id="O95866-2"/>
</dbReference>
<dbReference type="CCDS" id="CCDS34407.1">
    <molecule id="O95866-7"/>
</dbReference>
<dbReference type="CCDS" id="CCDS4715.1">
    <molecule id="O95866-1"/>
</dbReference>
<dbReference type="CCDS" id="CCDS4716.1">
    <molecule id="O95866-3"/>
</dbReference>
<dbReference type="CCDS" id="CCDS4717.1">
    <molecule id="O95866-4"/>
</dbReference>
<dbReference type="RefSeq" id="NP_079536.2">
    <molecule id="O95866-2"/>
    <property type="nucleotide sequence ID" value="NM_025260.3"/>
</dbReference>
<dbReference type="RefSeq" id="NP_612116.1">
    <molecule id="O95866-1"/>
    <property type="nucleotide sequence ID" value="NM_138272.3"/>
</dbReference>
<dbReference type="RefSeq" id="NP_612117.1">
    <molecule id="O95866-3"/>
    <property type="nucleotide sequence ID" value="NM_138273.3"/>
</dbReference>
<dbReference type="RefSeq" id="NP_612118.1">
    <molecule id="O95866-4"/>
    <property type="nucleotide sequence ID" value="NM_138274.3"/>
</dbReference>
<dbReference type="RefSeq" id="NP_612119.1">
    <molecule id="O95866-5"/>
    <property type="nucleotide sequence ID" value="NM_138275.3"/>
</dbReference>
<dbReference type="RefSeq" id="NP_612121.1">
    <molecule id="O95866-7"/>
    <property type="nucleotide sequence ID" value="NM_138277.3"/>
</dbReference>
<dbReference type="PDB" id="6R0X">
    <property type="method" value="X-ray"/>
    <property type="resolution" value="3.13 A"/>
    <property type="chains" value="E/F=18-133"/>
</dbReference>
<dbReference type="PDBsum" id="6R0X"/>
<dbReference type="SMR" id="O95866"/>
<dbReference type="BioGRID" id="123283">
    <property type="interactions" value="2"/>
</dbReference>
<dbReference type="FunCoup" id="O95866">
    <property type="interactions" value="216"/>
</dbReference>
<dbReference type="IntAct" id="O95866">
    <property type="interactions" value="3"/>
</dbReference>
<dbReference type="MINT" id="O95866"/>
<dbReference type="STRING" id="9606.ENSP00000497720"/>
<dbReference type="GlyCosmos" id="O95866">
    <property type="glycosylation" value="2 sites, 1 glycan"/>
</dbReference>
<dbReference type="GlyGen" id="O95866">
    <property type="glycosylation" value="4 sites, 1 O-linked glycan (1 site)"/>
</dbReference>
<dbReference type="iPTMnet" id="O95866"/>
<dbReference type="PhosphoSitePlus" id="O95866"/>
<dbReference type="BioMuta" id="MPIG6B"/>
<dbReference type="jPOST" id="O95866"/>
<dbReference type="MassIVE" id="O95866"/>
<dbReference type="PaxDb" id="9606-ENSP00000364964"/>
<dbReference type="PeptideAtlas" id="O95866"/>
<dbReference type="ProteomicsDB" id="51107">
    <molecule id="O95866-7"/>
</dbReference>
<dbReference type="ABCD" id="O95866">
    <property type="antibodies" value="1 sequenced antibody"/>
</dbReference>
<dbReference type="Antibodypedia" id="27557">
    <property type="antibodies" value="96 antibodies from 19 providers"/>
</dbReference>
<dbReference type="DNASU" id="80739"/>
<dbReference type="Ensembl" id="ENST00000375804.6">
    <molecule id="O95866-4"/>
    <property type="protein sequence ID" value="ENSP00000364962.2"/>
    <property type="gene ID" value="ENSG00000204420.10"/>
</dbReference>
<dbReference type="Ensembl" id="ENST00000375805.6">
    <molecule id="O95866-3"/>
    <property type="protein sequence ID" value="ENSP00000364963.2"/>
    <property type="gene ID" value="ENSG00000204420.10"/>
</dbReference>
<dbReference type="Ensembl" id="ENST00000375809.7">
    <molecule id="O95866-2"/>
    <property type="protein sequence ID" value="ENSP00000364967.3"/>
    <property type="gene ID" value="ENSG00000204420.10"/>
</dbReference>
<dbReference type="Ensembl" id="ENST00000375810.8">
    <molecule id="O95866-7"/>
    <property type="protein sequence ID" value="ENSP00000364968.4"/>
    <property type="gene ID" value="ENSG00000204420.10"/>
</dbReference>
<dbReference type="Ensembl" id="ENST00000375814.7">
    <molecule id="O95866-5"/>
    <property type="protein sequence ID" value="ENSP00000364972.3"/>
    <property type="gene ID" value="ENSG00000204420.10"/>
</dbReference>
<dbReference type="Ensembl" id="ENST00000383410.4">
    <molecule id="O95866-5"/>
    <property type="protein sequence ID" value="ENSP00000372902.4"/>
    <property type="gene ID" value="ENSG00000206396.9"/>
</dbReference>
<dbReference type="Ensembl" id="ENST00000383411.8">
    <molecule id="O95866-3"/>
    <property type="protein sequence ID" value="ENSP00000372903.4"/>
    <property type="gene ID" value="ENSG00000206396.9"/>
</dbReference>
<dbReference type="Ensembl" id="ENST00000383412.8">
    <molecule id="O95866-2"/>
    <property type="protein sequence ID" value="ENSP00000372904.4"/>
    <property type="gene ID" value="ENSG00000206396.9"/>
</dbReference>
<dbReference type="Ensembl" id="ENST00000400067.7">
    <molecule id="O95866-4"/>
    <property type="protein sequence ID" value="ENSP00000382940.3"/>
    <property type="gene ID" value="ENSG00000206396.9"/>
</dbReference>
<dbReference type="Ensembl" id="ENST00000400071.7">
    <molecule id="O95866-1"/>
    <property type="protein sequence ID" value="ENSP00000382944.3"/>
    <property type="gene ID" value="ENSG00000206396.9"/>
</dbReference>
<dbReference type="Ensembl" id="ENST00000411608.6">
    <molecule id="O95866-4"/>
    <property type="protein sequence ID" value="ENSP00000392961.2"/>
    <property type="gene ID" value="ENSG00000228090.6"/>
</dbReference>
<dbReference type="Ensembl" id="ENST00000415728.2">
    <molecule id="O95866-1"/>
    <property type="protein sequence ID" value="ENSP00000408430.2"/>
    <property type="gene ID" value="ENSG00000224393.6"/>
</dbReference>
<dbReference type="Ensembl" id="ENST00000415984.6">
    <molecule id="O95866-5"/>
    <property type="protein sequence ID" value="ENSP00000394082.2"/>
    <property type="gene ID" value="ENSG00000237459.6"/>
</dbReference>
<dbReference type="Ensembl" id="ENST00000417610.2">
    <molecule id="O95866-4"/>
    <property type="protein sequence ID" value="ENSP00000412747.2"/>
    <property type="gene ID" value="ENSG00000230060.6"/>
</dbReference>
<dbReference type="Ensembl" id="ENST00000422012.6">
    <molecule id="O95866-3"/>
    <property type="protein sequence ID" value="ENSP00000398061.2"/>
    <property type="gene ID" value="ENSG00000230060.6"/>
</dbReference>
<dbReference type="Ensembl" id="ENST00000425998.6">
    <molecule id="O95866-4"/>
    <property type="protein sequence ID" value="ENSP00000392917.2"/>
    <property type="gene ID" value="ENSG00000224393.6"/>
</dbReference>
<dbReference type="Ensembl" id="ENST00000426729.6">
    <molecule id="O95866-2"/>
    <property type="protein sequence ID" value="ENSP00000390272.2"/>
    <property type="gene ID" value="ENSG00000230060.6"/>
</dbReference>
<dbReference type="Ensembl" id="ENST00000428302.6">
    <molecule id="O95866-2"/>
    <property type="protein sequence ID" value="ENSP00000404519.2"/>
    <property type="gene ID" value="ENSG00000231003.6"/>
</dbReference>
<dbReference type="Ensembl" id="ENST00000431888.6">
    <molecule id="O95866-5"/>
    <property type="protein sequence ID" value="ENSP00000390821.2"/>
    <property type="gene ID" value="ENSG00000230060.6"/>
</dbReference>
<dbReference type="Ensembl" id="ENST00000433769.6">
    <molecule id="O95866-5"/>
    <property type="protein sequence ID" value="ENSP00000413647.2"/>
    <property type="gene ID" value="ENSG00000228090.6"/>
</dbReference>
<dbReference type="Ensembl" id="ENST00000435007.6">
    <molecule id="O95866-3"/>
    <property type="protein sequence ID" value="ENSP00000401892.2"/>
    <property type="gene ID" value="ENSG00000231003.6"/>
</dbReference>
<dbReference type="Ensembl" id="ENST00000436030.6">
    <molecule id="O95866-1"/>
    <property type="protein sequence ID" value="ENSP00000406706.2"/>
    <property type="gene ID" value="ENSG00000231003.6"/>
</dbReference>
<dbReference type="Ensembl" id="ENST00000437153.6">
    <molecule id="O95866-4"/>
    <property type="protein sequence ID" value="ENSP00000412937.2"/>
    <property type="gene ID" value="ENSG00000231003.6"/>
</dbReference>
<dbReference type="Ensembl" id="ENST00000440063.6">
    <molecule id="O95866-4"/>
    <property type="protein sequence ID" value="ENSP00000388982.2"/>
    <property type="gene ID" value="ENSG00000237459.6"/>
</dbReference>
<dbReference type="Ensembl" id="ENST00000444404.6">
    <molecule id="O95866-2"/>
    <property type="protein sequence ID" value="ENSP00000415282.2"/>
    <property type="gene ID" value="ENSG00000237459.6"/>
</dbReference>
<dbReference type="Ensembl" id="ENST00000445381.6">
    <molecule id="O95866-3"/>
    <property type="protein sequence ID" value="ENSP00000396823.2"/>
    <property type="gene ID" value="ENSG00000224393.6"/>
</dbReference>
<dbReference type="Ensembl" id="ENST00000447587.2">
    <molecule id="O95866-1"/>
    <property type="protein sequence ID" value="ENSP00000416447.2"/>
    <property type="gene ID" value="ENSG00000237459.6"/>
</dbReference>
<dbReference type="Ensembl" id="ENST00000449633.2">
    <molecule id="O95866-5"/>
    <property type="protein sequence ID" value="ENSP00000388484.2"/>
    <property type="gene ID" value="ENSG00000231003.6"/>
</dbReference>
<dbReference type="Ensembl" id="ENST00000451549.6">
    <molecule id="O95866-2"/>
    <property type="protein sequence ID" value="ENSP00000395801.2"/>
    <property type="gene ID" value="ENSG00000224393.6"/>
</dbReference>
<dbReference type="Ensembl" id="ENST00000455185.6">
    <molecule id="O95866-5"/>
    <property type="protein sequence ID" value="ENSP00000414824.2"/>
    <property type="gene ID" value="ENSG00000224393.6"/>
</dbReference>
<dbReference type="Ensembl" id="ENST00000457450.6">
    <molecule id="O95866-3"/>
    <property type="protein sequence ID" value="ENSP00000395279.2"/>
    <property type="gene ID" value="ENSG00000237459.6"/>
</dbReference>
<dbReference type="Ensembl" id="ENST00000457884.6">
    <molecule id="O95866-1"/>
    <property type="protein sequence ID" value="ENSP00000391097.2"/>
    <property type="gene ID" value="ENSG00000230060.6"/>
</dbReference>
<dbReference type="Ensembl" id="ENST00000649779.1">
    <molecule id="O95866-1"/>
    <property type="protein sequence ID" value="ENSP00000497720.1"/>
    <property type="gene ID" value="ENSG00000204420.10"/>
</dbReference>
<dbReference type="GeneID" id="80739"/>
<dbReference type="KEGG" id="hsa:80739"/>
<dbReference type="MANE-Select" id="ENST00000649779.1">
    <property type="protein sequence ID" value="ENSP00000497720.1"/>
    <property type="RefSeq nucleotide sequence ID" value="NM_138272.3"/>
    <property type="RefSeq protein sequence ID" value="NP_612116.1"/>
</dbReference>
<dbReference type="UCSC" id="uc003nwk.4">
    <molecule id="O95866-1"/>
    <property type="organism name" value="human"/>
</dbReference>
<dbReference type="AGR" id="HGNC:13937"/>
<dbReference type="CTD" id="80739"/>
<dbReference type="DisGeNET" id="80739"/>
<dbReference type="GeneCards" id="MPIG6B"/>
<dbReference type="HGNC" id="HGNC:13937">
    <property type="gene designation" value="MPIG6B"/>
</dbReference>
<dbReference type="HPA" id="ENSG00000204420">
    <property type="expression patterns" value="Tissue enhanced (lymphoid tissue, skin)"/>
</dbReference>
<dbReference type="MalaCards" id="MPIG6B"/>
<dbReference type="MIM" id="606520">
    <property type="type" value="gene"/>
</dbReference>
<dbReference type="MIM" id="617441">
    <property type="type" value="phenotype"/>
</dbReference>
<dbReference type="neXtProt" id="NX_O95866"/>
<dbReference type="OpenTargets" id="ENSG00000204420"/>
<dbReference type="PharmGKB" id="PA25926"/>
<dbReference type="VEuPathDB" id="HostDB:ENSG00000204420"/>
<dbReference type="eggNOG" id="ENOG502TEAD">
    <property type="taxonomic scope" value="Eukaryota"/>
</dbReference>
<dbReference type="GeneTree" id="ENSGT00390000017793"/>
<dbReference type="HOGENOM" id="CLU_101026_0_0_1"/>
<dbReference type="InParanoid" id="O95866"/>
<dbReference type="OMA" id="GVVWWWL"/>
<dbReference type="OrthoDB" id="9449554at2759"/>
<dbReference type="PAN-GO" id="O95866">
    <property type="GO annotations" value="5 GO annotations based on evolutionary models"/>
</dbReference>
<dbReference type="PhylomeDB" id="O95866"/>
<dbReference type="TreeFam" id="TF337394"/>
<dbReference type="PathwayCommons" id="O95866"/>
<dbReference type="Reactome" id="R-HSA-114604">
    <property type="pathway name" value="GPVI-mediated activation cascade"/>
</dbReference>
<dbReference type="SignaLink" id="O95866"/>
<dbReference type="BioGRID-ORCS" id="80739">
    <property type="hits" value="7 hits in 1131 CRISPR screens"/>
</dbReference>
<dbReference type="ChiTaRS" id="C6orf25">
    <property type="organism name" value="human"/>
</dbReference>
<dbReference type="GeneWiki" id="G6B_(gene)"/>
<dbReference type="GenomeRNAi" id="80739"/>
<dbReference type="Pharos" id="O95866">
    <property type="development level" value="Tbio"/>
</dbReference>
<dbReference type="PRO" id="PR:O95866"/>
<dbReference type="Proteomes" id="UP000005640">
    <property type="component" value="Chromosome 6"/>
</dbReference>
<dbReference type="RNAct" id="O95866">
    <property type="molecule type" value="protein"/>
</dbReference>
<dbReference type="Bgee" id="ENSG00000204420">
    <property type="expression patterns" value="Expressed in monocyte and 96 other cell types or tissues"/>
</dbReference>
<dbReference type="ExpressionAtlas" id="O95866">
    <property type="expression patterns" value="baseline and differential"/>
</dbReference>
<dbReference type="GO" id="GO:0005829">
    <property type="term" value="C:cytosol"/>
    <property type="evidence" value="ECO:0000314"/>
    <property type="project" value="HPA"/>
</dbReference>
<dbReference type="GO" id="GO:0005783">
    <property type="term" value="C:endoplasmic reticulum"/>
    <property type="evidence" value="ECO:0000314"/>
    <property type="project" value="HPA"/>
</dbReference>
<dbReference type="GO" id="GO:0005794">
    <property type="term" value="C:Golgi apparatus"/>
    <property type="evidence" value="ECO:0000314"/>
    <property type="project" value="HPA"/>
</dbReference>
<dbReference type="GO" id="GO:0005654">
    <property type="term" value="C:nucleoplasm"/>
    <property type="evidence" value="ECO:0000314"/>
    <property type="project" value="HPA"/>
</dbReference>
<dbReference type="GO" id="GO:0005886">
    <property type="term" value="C:plasma membrane"/>
    <property type="evidence" value="ECO:0000314"/>
    <property type="project" value="HPA"/>
</dbReference>
<dbReference type="GO" id="GO:0008201">
    <property type="term" value="F:heparin binding"/>
    <property type="evidence" value="ECO:0007669"/>
    <property type="project" value="UniProtKB-KW"/>
</dbReference>
<dbReference type="GO" id="GO:0007596">
    <property type="term" value="P:blood coagulation"/>
    <property type="evidence" value="ECO:0000250"/>
    <property type="project" value="UniProtKB"/>
</dbReference>
<dbReference type="GO" id="GO:0030218">
    <property type="term" value="P:erythrocyte differentiation"/>
    <property type="evidence" value="ECO:0000315"/>
    <property type="project" value="UniProtKB"/>
</dbReference>
<dbReference type="GO" id="GO:0007229">
    <property type="term" value="P:integrin-mediated signaling pathway"/>
    <property type="evidence" value="ECO:0000250"/>
    <property type="project" value="UniProtKB"/>
</dbReference>
<dbReference type="GO" id="GO:0035855">
    <property type="term" value="P:megakaryocyte development"/>
    <property type="evidence" value="ECO:0000250"/>
    <property type="project" value="UniProtKB"/>
</dbReference>
<dbReference type="GO" id="GO:0030219">
    <property type="term" value="P:megakaryocyte differentiation"/>
    <property type="evidence" value="ECO:0000315"/>
    <property type="project" value="UniProtKB"/>
</dbReference>
<dbReference type="GO" id="GO:0009968">
    <property type="term" value="P:negative regulation of signal transduction"/>
    <property type="evidence" value="ECO:0000314"/>
    <property type="project" value="UniProtKB"/>
</dbReference>
<dbReference type="GO" id="GO:0030220">
    <property type="term" value="P:platelet formation"/>
    <property type="evidence" value="ECO:0000250"/>
    <property type="project" value="UniProtKB"/>
</dbReference>
<dbReference type="InterPro" id="IPR028070">
    <property type="entry name" value="G6B"/>
</dbReference>
<dbReference type="InterPro" id="IPR048308">
    <property type="entry name" value="G6B_V-set"/>
</dbReference>
<dbReference type="PANTHER" id="PTHR37347">
    <property type="entry name" value="MEGAKARYOCYTE AND PLATELET INHIBITORY RECEPTOR G6B"/>
    <property type="match status" value="1"/>
</dbReference>
<dbReference type="PANTHER" id="PTHR37347:SF1">
    <property type="entry name" value="MEGAKARYOCYTE AND PLATELET INHIBITORY RECEPTOR G6B"/>
    <property type="match status" value="1"/>
</dbReference>
<dbReference type="Pfam" id="PF15096">
    <property type="entry name" value="G6B"/>
    <property type="match status" value="1"/>
</dbReference>
<sequence>MAVFLQLLPLLLSRAQGNPGASLDGRPGDRVNLSCGGVSHPIRWVWAPSFPACKGLSKGRRPILWASSSGTPTVPPLQPFVGRLRSLDSGIRRLELLLSAGDSGTFFCKGRHEDESRTVLHVLGDRTYCKAPGPTHGSVYPQLLIPLLGAGLVLGLGALGLVWWLHRRLPPQPIRPLPRFAPLVKTEPQRPVKEEEPKIPGDLDQEPSLLYADLDHLALSRPRRLSTADPADASTIYAVVV</sequence>
<gene>
    <name evidence="19" type="primary">MPIG6B</name>
    <name evidence="19" type="synonym">C6orf25</name>
    <name evidence="19" type="synonym">G6B</name>
    <name type="synonym">G6B-B</name>
</gene>
<feature type="signal peptide" evidence="3">
    <location>
        <begin position="1"/>
        <end position="17"/>
    </location>
</feature>
<feature type="chain" id="PRO_0000021312" description="Megakaryocyte and platelet inhibitory receptor G6b">
    <location>
        <begin position="18"/>
        <end position="241"/>
    </location>
</feature>
<feature type="topological domain" description="Extracellular" evidence="1 10">
    <location>
        <begin position="18"/>
        <end position="142"/>
    </location>
</feature>
<feature type="transmembrane region" description="Helical" evidence="1">
    <location>
        <begin position="143"/>
        <end position="163"/>
    </location>
</feature>
<feature type="topological domain" description="Cytoplasmic" evidence="1 10">
    <location>
        <begin position="164"/>
        <end position="241"/>
    </location>
</feature>
<feature type="short sequence motif" description="ITIM motif" evidence="14">
    <location>
        <begin position="209"/>
        <end position="214"/>
    </location>
</feature>
<feature type="short sequence motif" description="ITIM motif" evidence="14">
    <location>
        <begin position="235"/>
        <end position="240"/>
    </location>
</feature>
<feature type="modified residue" description="Phosphotyrosine" evidence="2">
    <location>
        <position position="211"/>
    </location>
</feature>
<feature type="glycosylation site" description="N-linked (GlcNAc...) asparagine" evidence="1">
    <location>
        <position position="32"/>
    </location>
</feature>
<feature type="splice variant" id="VSP_014172" description="In isoform D." evidence="10">
    <original>GSVYPQLLIPLLGAGLVLGLGALGLVWWLHRRLPPQPIRPLPRFAPLVKTEPQRPVKEEEPKIPGDLDQEPSLLYADLDHLALSRPRRLSTADPADASTIYAVVV</original>
    <variation>ALSPPHSSTCENRAPEASKGGRAQDSRGPGPGTEPALCGSGPSSPQQAPPAVHSGPC</variation>
    <location>
        <begin position="137"/>
        <end position="241"/>
    </location>
</feature>
<feature type="splice variant" id="VSP_014173" description="In isoform E." evidence="10">
    <location>
        <begin position="137"/>
        <end position="180"/>
    </location>
</feature>
<feature type="splice variant" id="VSP_014174" description="In isoform C." evidence="10">
    <original>SVYPQLLIPLLGAGLVLGLGALGLVWWLHRRLPPQPIRPLPRF</original>
    <variation>ACPRNRFDHSLDLLCPPHI</variation>
    <location>
        <begin position="138"/>
        <end position="180"/>
    </location>
</feature>
<feature type="splice variant" id="VSP_014175" description="In isoform F." evidence="10">
    <original>APLVKTEPQRPVKEEEPKIPGDLDQEPSLLYADLDHLALSRPRRLSTADPADASTIYAVVV</original>
    <variation>GETNSTPFSFSYMPTPHPSIPESEPLLGADTLVTFSPSFSSVPPT</variation>
    <location>
        <begin position="181"/>
        <end position="241"/>
    </location>
</feature>
<feature type="splice variant" id="VSP_014176" description="In isoform A." evidence="10">
    <original>PLVKTEPQRPVKEEEPKIPGDLDQEPSLLYADLDHLALSRPRRLSTADPADASTIYAVVV</original>
    <variation>LSPPHSSTCENRAPEASKGGRAQDSRGPGPGTEPALCGSGPSSPQQAPPAVHSGPC</variation>
    <location>
        <begin position="182"/>
        <end position="241"/>
    </location>
</feature>
<feature type="splice variant" id="VSP_014177" description="In isoform G." evidence="10 11">
    <original>PLVKTEPQRPVKEEEPKIPGDLDQEPSLLYADLDHLALSRPRRLSTADPADASTIYAVVV</original>
    <variation>LSPPHSSTCENRAPEASKGGRAQDSRGPGPGTGKGMGMGRG</variation>
    <location>
        <begin position="182"/>
        <end position="241"/>
    </location>
</feature>
<feature type="sequence variant" id="VAR_078570" description="In THAMY; increased protein degradation; decreased enhancement of hematopoietic lineage differentiation." evidence="9">
    <location>
        <begin position="108"/>
        <end position="241"/>
    </location>
</feature>
<feature type="sequence variant" id="VAR_051004" description="In dbSNP:rs11575845." evidence="4">
    <original>R</original>
    <variation>G</variation>
    <location>
        <position position="175"/>
    </location>
</feature>
<feature type="mutagenesis site" description="Abolishes the inhibitory effect against ligand-induced activation of PLCG2 by CLEC1B and GP6:FCER1G; when associated with F-237." evidence="7">
    <original>Y</original>
    <variation>F</variation>
    <location>
        <position position="211"/>
    </location>
</feature>
<feature type="mutagenesis site" description="Loss of tyrosine phosphorylation and loss of interaction with PTPN6 and PTPN11." evidence="2">
    <original>Y</original>
    <variation>F</variation>
    <location>
        <position position="211"/>
    </location>
</feature>
<feature type="mutagenesis site" description="Abolishes the inhibitory effect against ligand-induced activation of PLCG2 by CLEC1B and GP6:FCER1G; when associated with F-237." evidence="7">
    <original>Y</original>
    <variation>F</variation>
    <location>
        <position position="237"/>
    </location>
</feature>
<feature type="mutagenesis site" description="Reduced level of tyrosine phosphorylation and interaction with PTPN6 and PTPN11." evidence="2">
    <original>Y</original>
    <variation>F</variation>
    <location>
        <position position="237"/>
    </location>
</feature>
<feature type="sequence conflict" description="In Ref. 5; CAI18409." evidence="12" ref="5">
    <original>GS</original>
    <variation>ID</variation>
    <location>
        <begin position="137"/>
        <end position="138"/>
    </location>
</feature>
<feature type="strand" evidence="20">
    <location>
        <begin position="21"/>
        <end position="25"/>
    </location>
</feature>
<feature type="strand" evidence="20">
    <location>
        <begin position="30"/>
        <end position="33"/>
    </location>
</feature>
<feature type="strand" evidence="20">
    <location>
        <begin position="67"/>
        <end position="69"/>
    </location>
</feature>
<feature type="strand" evidence="20">
    <location>
        <begin position="94"/>
        <end position="97"/>
    </location>
</feature>
<feature type="turn" evidence="20">
    <location>
        <begin position="99"/>
        <end position="101"/>
    </location>
</feature>
<feature type="strand" evidence="20">
    <location>
        <begin position="104"/>
        <end position="106"/>
    </location>
</feature>
<feature type="strand" evidence="20">
    <location>
        <begin position="111"/>
        <end position="113"/>
    </location>
</feature>
<feature type="strand" evidence="20">
    <location>
        <begin position="118"/>
        <end position="123"/>
    </location>
</feature>
<evidence type="ECO:0000255" key="1"/>
<evidence type="ECO:0000269" key="2">
    <source>
    </source>
</evidence>
<evidence type="ECO:0000269" key="3">
    <source>
    </source>
</evidence>
<evidence type="ECO:0000269" key="4">
    <source>
    </source>
</evidence>
<evidence type="ECO:0000269" key="5">
    <source>
    </source>
</evidence>
<evidence type="ECO:0000269" key="6">
    <source>
    </source>
</evidence>
<evidence type="ECO:0000269" key="7">
    <source>
    </source>
</evidence>
<evidence type="ECO:0000269" key="8">
    <source>
    </source>
</evidence>
<evidence type="ECO:0000269" key="9">
    <source>
    </source>
</evidence>
<evidence type="ECO:0000303" key="10">
    <source>
    </source>
</evidence>
<evidence type="ECO:0000303" key="11">
    <source>
    </source>
</evidence>
<evidence type="ECO:0000305" key="12"/>
<evidence type="ECO:0000305" key="13">
    <source>
    </source>
</evidence>
<evidence type="ECO:0000305" key="14">
    <source>
    </source>
</evidence>
<evidence type="ECO:0000312" key="15">
    <source>
        <dbReference type="EMBL" id="AAD18075.1"/>
    </source>
</evidence>
<evidence type="ECO:0000312" key="16">
    <source>
        <dbReference type="EMBL" id="BAB63378.1"/>
    </source>
</evidence>
<evidence type="ECO:0000312" key="17">
    <source>
        <dbReference type="EMBL" id="CAC83497.1"/>
    </source>
</evidence>
<evidence type="ECO:0000312" key="18">
    <source>
        <dbReference type="EMBL" id="CAI18408.1"/>
    </source>
</evidence>
<evidence type="ECO:0000312" key="19">
    <source>
        <dbReference type="HGNC" id="HGNC:13937"/>
    </source>
</evidence>
<evidence type="ECO:0007829" key="20">
    <source>
        <dbReference type="PDB" id="6R0X"/>
    </source>
</evidence>
<name>G6B_HUMAN</name>
<organism>
    <name type="scientific">Homo sapiens</name>
    <name type="common">Human</name>
    <dbReference type="NCBI Taxonomy" id="9606"/>
    <lineage>
        <taxon>Eukaryota</taxon>
        <taxon>Metazoa</taxon>
        <taxon>Chordata</taxon>
        <taxon>Craniata</taxon>
        <taxon>Vertebrata</taxon>
        <taxon>Euteleostomi</taxon>
        <taxon>Mammalia</taxon>
        <taxon>Eutheria</taxon>
        <taxon>Euarchontoglires</taxon>
        <taxon>Primates</taxon>
        <taxon>Haplorrhini</taxon>
        <taxon>Catarrhini</taxon>
        <taxon>Hominidae</taxon>
        <taxon>Homo</taxon>
    </lineage>
</organism>
<proteinExistence type="evidence at protein level"/>
<reference evidence="12 17" key="1">
    <citation type="journal article" date="2001" name="J. Biol. Chem.">
        <title>G6b, a novel immunoglobulin superfamily member encoded in the human major histocompatibility complex, interacts with SHP-1 and SHP-2.</title>
        <authorList>
            <person name="de Vet E.C.M."/>
            <person name="Aguado B."/>
            <person name="Campbell R.D."/>
        </authorList>
    </citation>
    <scope>NUCLEOTIDE SEQUENCE [MRNA] (ISOFORMS A; B; C; D; E; F AND G)</scope>
    <scope>INTERACTION WITH PTPN6 AND PTPN11</scope>
    <scope>SUBCELLULAR LOCATION</scope>
    <scope>TISSUE SPECIFICITY</scope>
    <scope>GLYCOSYLATION</scope>
    <scope>PHOSPHORYLATION AT TYR-211</scope>
    <scope>MUTAGENESIS OF TYR-211 AND TYR-237</scope>
    <source>
        <tissue>T-cell</tissue>
    </source>
</reference>
<reference evidence="15" key="2">
    <citation type="journal article" date="2003" name="Genome Res.">
        <title>Analysis of the gene-dense major histocompatibility complex class III region and its comparison to mouse.</title>
        <authorList>
            <person name="Xie T."/>
            <person name="Rowen L."/>
            <person name="Aguado B."/>
            <person name="Ahearn M.E."/>
            <person name="Madan A."/>
            <person name="Qin S."/>
            <person name="Campbell R.D."/>
            <person name="Hood L."/>
        </authorList>
    </citation>
    <scope>NUCLEOTIDE SEQUENCE [LARGE SCALE GENOMIC DNA]</scope>
</reference>
<reference evidence="12 16" key="3">
    <citation type="submission" date="2005-07" db="EMBL/GenBank/DDBJ databases">
        <authorList>
            <person name="Mural R.J."/>
            <person name="Istrail S."/>
            <person name="Sutton G.G."/>
            <person name="Florea L."/>
            <person name="Halpern A.L."/>
            <person name="Mobarry C.M."/>
            <person name="Lippert R."/>
            <person name="Walenz B."/>
            <person name="Shatkay H."/>
            <person name="Dew I."/>
            <person name="Miller J.R."/>
            <person name="Flanigan M.J."/>
            <person name="Edwards N.J."/>
            <person name="Bolanos R."/>
            <person name="Fasulo D."/>
            <person name="Halldorsson B.V."/>
            <person name="Hannenhalli S."/>
            <person name="Turner R."/>
            <person name="Yooseph S."/>
            <person name="Lu F."/>
            <person name="Nusskern D.R."/>
            <person name="Shue B.C."/>
            <person name="Zheng X.H."/>
            <person name="Zhong F."/>
            <person name="Delcher A.L."/>
            <person name="Huson D.H."/>
            <person name="Kravitz S.A."/>
            <person name="Mouchard L."/>
            <person name="Reinert K."/>
            <person name="Remington K.A."/>
            <person name="Clark A.G."/>
            <person name="Waterman M.S."/>
            <person name="Eichler E.E."/>
            <person name="Adams M.D."/>
            <person name="Hunkapiller M.W."/>
            <person name="Myers E.W."/>
            <person name="Venter J.C."/>
        </authorList>
    </citation>
    <scope>NUCLEOTIDE SEQUENCE [LARGE SCALE GENOMIC DNA]</scope>
</reference>
<reference evidence="12 16" key="4">
    <citation type="submission" date="2001-08" db="EMBL/GenBank/DDBJ databases">
        <title>Homo sapiens 2,229,817bp genomic DNA of 6p21.3 HLA class I region.</title>
        <authorList>
            <person name="Shiina S."/>
            <person name="Tamiya G."/>
            <person name="Oka A."/>
            <person name="Inoko H."/>
        </authorList>
    </citation>
    <scope>NUCLEOTIDE SEQUENCE [LARGE SCALE GENOMIC DNA]</scope>
</reference>
<reference evidence="18" key="5">
    <citation type="journal article" date="2003" name="Nature">
        <title>The DNA sequence and analysis of human chromosome 6.</title>
        <authorList>
            <person name="Mungall A.J."/>
            <person name="Palmer S.A."/>
            <person name="Sims S.K."/>
            <person name="Edwards C.A."/>
            <person name="Ashurst J.L."/>
            <person name="Wilming L."/>
            <person name="Jones M.C."/>
            <person name="Horton R."/>
            <person name="Hunt S.E."/>
            <person name="Scott C.E."/>
            <person name="Gilbert J.G.R."/>
            <person name="Clamp M.E."/>
            <person name="Bethel G."/>
            <person name="Milne S."/>
            <person name="Ainscough R."/>
            <person name="Almeida J.P."/>
            <person name="Ambrose K.D."/>
            <person name="Andrews T.D."/>
            <person name="Ashwell R.I.S."/>
            <person name="Babbage A.K."/>
            <person name="Bagguley C.L."/>
            <person name="Bailey J."/>
            <person name="Banerjee R."/>
            <person name="Barker D.J."/>
            <person name="Barlow K.F."/>
            <person name="Bates K."/>
            <person name="Beare D.M."/>
            <person name="Beasley H."/>
            <person name="Beasley O."/>
            <person name="Bird C.P."/>
            <person name="Blakey S.E."/>
            <person name="Bray-Allen S."/>
            <person name="Brook J."/>
            <person name="Brown A.J."/>
            <person name="Brown J.Y."/>
            <person name="Burford D.C."/>
            <person name="Burrill W."/>
            <person name="Burton J."/>
            <person name="Carder C."/>
            <person name="Carter N.P."/>
            <person name="Chapman J.C."/>
            <person name="Clark S.Y."/>
            <person name="Clark G."/>
            <person name="Clee C.M."/>
            <person name="Clegg S."/>
            <person name="Cobley V."/>
            <person name="Collier R.E."/>
            <person name="Collins J.E."/>
            <person name="Colman L.K."/>
            <person name="Corby N.R."/>
            <person name="Coville G.J."/>
            <person name="Culley K.M."/>
            <person name="Dhami P."/>
            <person name="Davies J."/>
            <person name="Dunn M."/>
            <person name="Earthrowl M.E."/>
            <person name="Ellington A.E."/>
            <person name="Evans K.A."/>
            <person name="Faulkner L."/>
            <person name="Francis M.D."/>
            <person name="Frankish A."/>
            <person name="Frankland J."/>
            <person name="French L."/>
            <person name="Garner P."/>
            <person name="Garnett J."/>
            <person name="Ghori M.J."/>
            <person name="Gilby L.M."/>
            <person name="Gillson C.J."/>
            <person name="Glithero R.J."/>
            <person name="Grafham D.V."/>
            <person name="Grant M."/>
            <person name="Gribble S."/>
            <person name="Griffiths C."/>
            <person name="Griffiths M.N.D."/>
            <person name="Hall R."/>
            <person name="Halls K.S."/>
            <person name="Hammond S."/>
            <person name="Harley J.L."/>
            <person name="Hart E.A."/>
            <person name="Heath P.D."/>
            <person name="Heathcott R."/>
            <person name="Holmes S.J."/>
            <person name="Howden P.J."/>
            <person name="Howe K.L."/>
            <person name="Howell G.R."/>
            <person name="Huckle E."/>
            <person name="Humphray S.J."/>
            <person name="Humphries M.D."/>
            <person name="Hunt A.R."/>
            <person name="Johnson C.M."/>
            <person name="Joy A.A."/>
            <person name="Kay M."/>
            <person name="Keenan S.J."/>
            <person name="Kimberley A.M."/>
            <person name="King A."/>
            <person name="Laird G.K."/>
            <person name="Langford C."/>
            <person name="Lawlor S."/>
            <person name="Leongamornlert D.A."/>
            <person name="Leversha M."/>
            <person name="Lloyd C.R."/>
            <person name="Lloyd D.M."/>
            <person name="Loveland J.E."/>
            <person name="Lovell J."/>
            <person name="Martin S."/>
            <person name="Mashreghi-Mohammadi M."/>
            <person name="Maslen G.L."/>
            <person name="Matthews L."/>
            <person name="McCann O.T."/>
            <person name="McLaren S.J."/>
            <person name="McLay K."/>
            <person name="McMurray A."/>
            <person name="Moore M.J.F."/>
            <person name="Mullikin J.C."/>
            <person name="Niblett D."/>
            <person name="Nickerson T."/>
            <person name="Novik K.L."/>
            <person name="Oliver K."/>
            <person name="Overton-Larty E.K."/>
            <person name="Parker A."/>
            <person name="Patel R."/>
            <person name="Pearce A.V."/>
            <person name="Peck A.I."/>
            <person name="Phillimore B.J.C.T."/>
            <person name="Phillips S."/>
            <person name="Plumb R.W."/>
            <person name="Porter K.M."/>
            <person name="Ramsey Y."/>
            <person name="Ranby S.A."/>
            <person name="Rice C.M."/>
            <person name="Ross M.T."/>
            <person name="Searle S.M."/>
            <person name="Sehra H.K."/>
            <person name="Sheridan E."/>
            <person name="Skuce C.D."/>
            <person name="Smith S."/>
            <person name="Smith M."/>
            <person name="Spraggon L."/>
            <person name="Squares S.L."/>
            <person name="Steward C.A."/>
            <person name="Sycamore N."/>
            <person name="Tamlyn-Hall G."/>
            <person name="Tester J."/>
            <person name="Theaker A.J."/>
            <person name="Thomas D.W."/>
            <person name="Thorpe A."/>
            <person name="Tracey A."/>
            <person name="Tromans A."/>
            <person name="Tubby B."/>
            <person name="Wall M."/>
            <person name="Wallis J.M."/>
            <person name="West A.P."/>
            <person name="White S.S."/>
            <person name="Whitehead S.L."/>
            <person name="Whittaker H."/>
            <person name="Wild A."/>
            <person name="Willey D.J."/>
            <person name="Wilmer T.E."/>
            <person name="Wood J.M."/>
            <person name="Wray P.W."/>
            <person name="Wyatt J.C."/>
            <person name="Young L."/>
            <person name="Younger R.M."/>
            <person name="Bentley D.R."/>
            <person name="Coulson A."/>
            <person name="Durbin R.M."/>
            <person name="Hubbard T."/>
            <person name="Sulston J.E."/>
            <person name="Dunham I."/>
            <person name="Rogers J."/>
            <person name="Beck S."/>
        </authorList>
    </citation>
    <scope>NUCLEOTIDE SEQUENCE [LARGE SCALE GENOMIC DNA]</scope>
    <scope>VARIANT GLY-175</scope>
</reference>
<reference key="6">
    <citation type="journal article" date="2004" name="Genome Res.">
        <title>The status, quality, and expansion of the NIH full-length cDNA project: the Mammalian Gene Collection (MGC).</title>
        <authorList>
            <consortium name="The MGC Project Team"/>
        </authorList>
    </citation>
    <scope>NUCLEOTIDE SEQUENCE [LARGE SCALE MRNA] (ISOFORM G)</scope>
</reference>
<reference evidence="12" key="7">
    <citation type="journal article" date="2003" name="Nat. Biotechnol.">
        <title>Exploring proteomes and analyzing protein processing by mass spectrometric identification of sorted N-terminal peptides.</title>
        <authorList>
            <person name="Gevaert K."/>
            <person name="Goethals M."/>
            <person name="Martens L."/>
            <person name="Van Damme J."/>
            <person name="Staes A."/>
            <person name="Thomas G.R."/>
            <person name="Vandekerckhove J."/>
        </authorList>
    </citation>
    <scope>PROTEIN SEQUENCE OF 18-30</scope>
    <source>
        <tissue evidence="3">Platelet</tissue>
    </source>
</reference>
<reference key="8">
    <citation type="journal article" date="2005" name="FEBS Lett.">
        <title>The cell surface receptor G6b, a member of the immunoglobulin superfamily, binds heparin.</title>
        <authorList>
            <person name="de Vet E.C."/>
            <person name="Newland S.A."/>
            <person name="Lyons P.A."/>
            <person name="Aguado B."/>
            <person name="Campbell R.D."/>
        </authorList>
    </citation>
    <scope>HEPARIN-BINDING</scope>
</reference>
<reference key="9">
    <citation type="journal article" date="2007" name="Blood">
        <title>The novel inhibitory receptor G6B is expressed on the surface of platelets and attenuates platelet function in vitro.</title>
        <authorList>
            <person name="Newland S.A."/>
            <person name="Macaulay I.C."/>
            <person name="Floto A.R."/>
            <person name="de Vet E.C."/>
            <person name="Ouwehand W.H."/>
            <person name="Watkins N.A."/>
            <person name="Lyons P.A."/>
            <person name="Campbell D.R."/>
        </authorList>
    </citation>
    <scope>FUNCTION</scope>
    <scope>TISSUE SPECIFICITY</scope>
</reference>
<reference key="10">
    <citation type="journal article" date="2008" name="J. Biol. Chem.">
        <title>G6b-B inhibits constitutive and agonist-induced signaling by glycoprotein VI and CLEC-2.</title>
        <authorList>
            <person name="Mori J."/>
            <person name="Pearce A.C."/>
            <person name="Spalton J.C."/>
            <person name="Grygielska B."/>
            <person name="Eble J.A."/>
            <person name="Tomlinson M.G."/>
            <person name="Senis Y.A."/>
            <person name="Watson S.P."/>
        </authorList>
    </citation>
    <scope>FUNCTION</scope>
    <scope>DOMAIN</scope>
    <scope>MUTAGENESIS OF TYR-211 AND TYR-237</scope>
</reference>
<reference key="11">
    <citation type="journal article" date="2008" name="J. Proteome Res.">
        <title>Phosphoproteome of resting human platelets.</title>
        <authorList>
            <person name="Zahedi R.P."/>
            <person name="Lewandrowski U."/>
            <person name="Wiesner J."/>
            <person name="Wortelkamp S."/>
            <person name="Moebius J."/>
            <person name="Schuetz C."/>
            <person name="Walter U."/>
            <person name="Gambaryan S."/>
            <person name="Sickmann A."/>
        </authorList>
    </citation>
    <scope>IDENTIFICATION BY MASS SPECTROMETRY [LARGE SCALE ANALYSIS]</scope>
    <source>
        <tissue>Platelet</tissue>
    </source>
</reference>
<reference key="12">
    <citation type="journal article" date="2012" name="Sci. Signal.">
        <title>Mice lacking the ITIM-containing receptor G6b-B exhibit macrothrombocytopenia and aberrant platelet function.</title>
        <authorList>
            <person name="Mazharian A."/>
            <person name="Wang Y.J."/>
            <person name="Mori J."/>
            <person name="Bem D."/>
            <person name="Finney B."/>
            <person name="Heising S."/>
            <person name="Gissen P."/>
            <person name="White J.G."/>
            <person name="Berndt M.C."/>
            <person name="Gardiner E.E."/>
            <person name="Nieswandt B."/>
            <person name="Douglas M.R."/>
            <person name="Campbell R.D."/>
            <person name="Watson S.P."/>
            <person name="Senis Y.A."/>
        </authorList>
    </citation>
    <scope>GLYCOSYLATION</scope>
    <scope>PHOSPHORYLATION</scope>
    <scope>INTERACTION WITH PTPN6 AND PTPN11</scope>
</reference>
<reference key="13">
    <citation type="journal article" date="2017" name="Eur. J. Haematol.">
        <title>Novel G6B gene variant causes familial autosomal recessive thrombocytopenia and anemia.</title>
        <authorList>
            <person name="Melhem M."/>
            <person name="Abu-Farha M."/>
            <person name="Antony D."/>
            <person name="Madhoun A.A."/>
            <person name="Bacchelli C."/>
            <person name="Alkayal F."/>
            <person name="AlKhairi I."/>
            <person name="John S."/>
            <person name="Alomari M."/>
            <person name="Beales P.L."/>
            <person name="Alsmadi O."/>
        </authorList>
    </citation>
    <scope>INVOLVEMENT IN THAMY</scope>
    <scope>VARIANT THAMY 108-CYS--VAL-241 DEL</scope>
    <scope>CHARACTERIZATION OF VARIANT THAMY 108-CYS--VAL-241 DEL</scope>
    <scope>FUNCTION</scope>
</reference>